<keyword id="KW-0997">Cell inner membrane</keyword>
<keyword id="KW-1003">Cell membrane</keyword>
<keyword id="KW-0350">Heme biosynthesis</keyword>
<keyword id="KW-0472">Membrane</keyword>
<keyword id="KW-1185">Reference proteome</keyword>
<keyword id="KW-0808">Transferase</keyword>
<keyword id="KW-0812">Transmembrane</keyword>
<keyword id="KW-1133">Transmembrane helix</keyword>
<reference key="1">
    <citation type="journal article" date="2005" name="Nat. Biotechnol.">
        <title>Complete genome sequence of the acetic acid bacterium Gluconobacter oxydans.</title>
        <authorList>
            <person name="Prust C."/>
            <person name="Hoffmeister M."/>
            <person name="Liesegang H."/>
            <person name="Wiezer A."/>
            <person name="Fricke W.F."/>
            <person name="Ehrenreich A."/>
            <person name="Gottschalk G."/>
            <person name="Deppenmeier U."/>
        </authorList>
    </citation>
    <scope>NUCLEOTIDE SEQUENCE [LARGE SCALE GENOMIC DNA]</scope>
    <source>
        <strain>621H</strain>
    </source>
</reference>
<dbReference type="EC" id="2.5.1.141" evidence="1"/>
<dbReference type="EMBL" id="CP000009">
    <property type="protein sequence ID" value="AAW61602.1"/>
    <property type="molecule type" value="Genomic_DNA"/>
</dbReference>
<dbReference type="RefSeq" id="WP_011253383.1">
    <property type="nucleotide sequence ID" value="NC_006677.1"/>
</dbReference>
<dbReference type="SMR" id="Q5FPU4"/>
<dbReference type="STRING" id="290633.GOX1864"/>
<dbReference type="KEGG" id="gox:GOX1864"/>
<dbReference type="eggNOG" id="COG0109">
    <property type="taxonomic scope" value="Bacteria"/>
</dbReference>
<dbReference type="HOGENOM" id="CLU_029631_0_2_5"/>
<dbReference type="UniPathway" id="UPA00834">
    <property type="reaction ID" value="UER00712"/>
</dbReference>
<dbReference type="Proteomes" id="UP000006375">
    <property type="component" value="Chromosome"/>
</dbReference>
<dbReference type="GO" id="GO:0005886">
    <property type="term" value="C:plasma membrane"/>
    <property type="evidence" value="ECO:0007669"/>
    <property type="project" value="UniProtKB-SubCell"/>
</dbReference>
<dbReference type="GO" id="GO:0008495">
    <property type="term" value="F:protoheme IX farnesyltransferase activity"/>
    <property type="evidence" value="ECO:0007669"/>
    <property type="project" value="UniProtKB-UniRule"/>
</dbReference>
<dbReference type="GO" id="GO:0048034">
    <property type="term" value="P:heme O biosynthetic process"/>
    <property type="evidence" value="ECO:0007669"/>
    <property type="project" value="UniProtKB-UniRule"/>
</dbReference>
<dbReference type="CDD" id="cd13957">
    <property type="entry name" value="PT_UbiA_Cox10"/>
    <property type="match status" value="1"/>
</dbReference>
<dbReference type="Gene3D" id="1.10.357.140">
    <property type="entry name" value="UbiA prenyltransferase"/>
    <property type="match status" value="1"/>
</dbReference>
<dbReference type="HAMAP" id="MF_00154">
    <property type="entry name" value="CyoE_CtaB"/>
    <property type="match status" value="1"/>
</dbReference>
<dbReference type="InterPro" id="IPR006369">
    <property type="entry name" value="Protohaem_IX_farnesylTrfase"/>
</dbReference>
<dbReference type="InterPro" id="IPR000537">
    <property type="entry name" value="UbiA_prenyltransferase"/>
</dbReference>
<dbReference type="InterPro" id="IPR030470">
    <property type="entry name" value="UbiA_prenylTrfase_CS"/>
</dbReference>
<dbReference type="InterPro" id="IPR044878">
    <property type="entry name" value="UbiA_sf"/>
</dbReference>
<dbReference type="NCBIfam" id="TIGR01473">
    <property type="entry name" value="cyoE_ctaB"/>
    <property type="match status" value="1"/>
</dbReference>
<dbReference type="NCBIfam" id="NF003349">
    <property type="entry name" value="PRK04375.1-2"/>
    <property type="match status" value="1"/>
</dbReference>
<dbReference type="PANTHER" id="PTHR43448:SF7">
    <property type="entry name" value="4-HYDROXYBENZOATE SOLANESYLTRANSFERASE"/>
    <property type="match status" value="1"/>
</dbReference>
<dbReference type="PANTHER" id="PTHR43448">
    <property type="entry name" value="PROTOHEME IX FARNESYLTRANSFERASE, MITOCHONDRIAL"/>
    <property type="match status" value="1"/>
</dbReference>
<dbReference type="Pfam" id="PF01040">
    <property type="entry name" value="UbiA"/>
    <property type="match status" value="1"/>
</dbReference>
<dbReference type="PROSITE" id="PS00943">
    <property type="entry name" value="UBIA"/>
    <property type="match status" value="1"/>
</dbReference>
<gene>
    <name evidence="1" type="primary">ctaB</name>
    <name type="ordered locus">GOX1864</name>
</gene>
<accession>Q5FPU4</accession>
<feature type="chain" id="PRO_0000327059" description="Protoheme IX farnesyltransferase">
    <location>
        <begin position="1"/>
        <end position="316"/>
    </location>
</feature>
<feature type="transmembrane region" description="Helical" evidence="1">
    <location>
        <begin position="28"/>
        <end position="48"/>
    </location>
</feature>
<feature type="transmembrane region" description="Helical" evidence="1">
    <location>
        <begin position="57"/>
        <end position="77"/>
    </location>
</feature>
<feature type="transmembrane region" description="Helical" evidence="1">
    <location>
        <begin position="106"/>
        <end position="126"/>
    </location>
</feature>
<feature type="transmembrane region" description="Helical" evidence="1">
    <location>
        <begin position="129"/>
        <end position="149"/>
    </location>
</feature>
<feature type="transmembrane region" description="Helical" evidence="1">
    <location>
        <begin position="156"/>
        <end position="176"/>
    </location>
</feature>
<feature type="transmembrane region" description="Helical" evidence="1">
    <location>
        <begin position="179"/>
        <end position="199"/>
    </location>
</feature>
<feature type="transmembrane region" description="Helical" evidence="1">
    <location>
        <begin position="230"/>
        <end position="250"/>
    </location>
</feature>
<feature type="transmembrane region" description="Helical" evidence="1">
    <location>
        <begin position="254"/>
        <end position="274"/>
    </location>
</feature>
<feature type="transmembrane region" description="Helical" evidence="1">
    <location>
        <begin position="296"/>
        <end position="316"/>
    </location>
</feature>
<organism>
    <name type="scientific">Gluconobacter oxydans (strain 621H)</name>
    <name type="common">Gluconobacter suboxydans</name>
    <dbReference type="NCBI Taxonomy" id="290633"/>
    <lineage>
        <taxon>Bacteria</taxon>
        <taxon>Pseudomonadati</taxon>
        <taxon>Pseudomonadota</taxon>
        <taxon>Alphaproteobacteria</taxon>
        <taxon>Acetobacterales</taxon>
        <taxon>Acetobacteraceae</taxon>
        <taxon>Gluconobacter</taxon>
    </lineage>
</organism>
<comment type="function">
    <text evidence="1">Converts heme B (protoheme IX) to heme O by substitution of the vinyl group on carbon 2 of heme B porphyrin ring with a hydroxyethyl farnesyl side group.</text>
</comment>
<comment type="catalytic activity">
    <reaction evidence="1">
        <text>heme b + (2E,6E)-farnesyl diphosphate + H2O = Fe(II)-heme o + diphosphate</text>
        <dbReference type="Rhea" id="RHEA:28070"/>
        <dbReference type="ChEBI" id="CHEBI:15377"/>
        <dbReference type="ChEBI" id="CHEBI:33019"/>
        <dbReference type="ChEBI" id="CHEBI:60344"/>
        <dbReference type="ChEBI" id="CHEBI:60530"/>
        <dbReference type="ChEBI" id="CHEBI:175763"/>
        <dbReference type="EC" id="2.5.1.141"/>
    </reaction>
</comment>
<comment type="pathway">
    <text evidence="1">Porphyrin-containing compound metabolism; heme O biosynthesis; heme O from protoheme: step 1/1.</text>
</comment>
<comment type="subcellular location">
    <subcellularLocation>
        <location evidence="1">Cell inner membrane</location>
        <topology evidence="1">Multi-pass membrane protein</topology>
    </subcellularLocation>
</comment>
<comment type="miscellaneous">
    <text evidence="1">Carbon 2 of the heme B porphyrin ring is defined according to the Fischer nomenclature.</text>
</comment>
<comment type="similarity">
    <text evidence="1">Belongs to the UbiA prenyltransferase family. Protoheme IX farnesyltransferase subfamily.</text>
</comment>
<sequence>MSDTATPLAPSGVFSVPGKDGDPSLREWLALLKPRVISLVVFTGAAGMAVAPRWPSIPIGLITILCICIGAGAAGAINMWYDRDIDAIMKRTVVRPIPDGRMPEQAALVYGVVLSVLSVIVLWLATNALAADILAFSIFFYSVIYTMWLKRSTPQNIVIGGAAGAFPPMIGWAATMNSMAVLPVAMFAIVFLWTPPHFWSLSLYACKDYGKAGIPMLPVVKGARHTRWQILIYTFILTAVSLVPSFVHEVGLTYTVVTSLLDLGFILCAFRVLMDKQDAEGVSLTKDKPARFAFRYSLVYLFLLFCGLLVDRVLIG</sequence>
<evidence type="ECO:0000255" key="1">
    <source>
        <dbReference type="HAMAP-Rule" id="MF_00154"/>
    </source>
</evidence>
<name>COXX_GLUOX</name>
<protein>
    <recommendedName>
        <fullName evidence="1">Protoheme IX farnesyltransferase</fullName>
        <ecNumber evidence="1">2.5.1.141</ecNumber>
    </recommendedName>
    <alternativeName>
        <fullName evidence="1">Heme B farnesyltransferase</fullName>
    </alternativeName>
    <alternativeName>
        <fullName evidence="1">Heme O synthase</fullName>
    </alternativeName>
</protein>
<proteinExistence type="inferred from homology"/>